<dbReference type="EC" id="2.1.2.10" evidence="1"/>
<dbReference type="EMBL" id="AE014299">
    <property type="protein sequence ID" value="AAN53855.1"/>
    <property type="molecule type" value="Genomic_DNA"/>
</dbReference>
<dbReference type="RefSeq" id="NP_716410.1">
    <property type="nucleotide sequence ID" value="NC_004347.2"/>
</dbReference>
<dbReference type="RefSeq" id="WP_011071082.1">
    <property type="nucleotide sequence ID" value="NC_004347.2"/>
</dbReference>
<dbReference type="SMR" id="Q8EIQ8"/>
<dbReference type="STRING" id="211586.SO_0779"/>
<dbReference type="PaxDb" id="211586-SO_0779"/>
<dbReference type="KEGG" id="son:SO_0779"/>
<dbReference type="PATRIC" id="fig|211586.12.peg.749"/>
<dbReference type="eggNOG" id="COG0404">
    <property type="taxonomic scope" value="Bacteria"/>
</dbReference>
<dbReference type="HOGENOM" id="CLU_007884_10_2_6"/>
<dbReference type="OrthoDB" id="9774591at2"/>
<dbReference type="PhylomeDB" id="Q8EIQ8"/>
<dbReference type="BioCyc" id="SONE211586:G1GMP-731-MONOMER"/>
<dbReference type="Proteomes" id="UP000008186">
    <property type="component" value="Chromosome"/>
</dbReference>
<dbReference type="GO" id="GO:0005829">
    <property type="term" value="C:cytosol"/>
    <property type="evidence" value="ECO:0000318"/>
    <property type="project" value="GO_Central"/>
</dbReference>
<dbReference type="GO" id="GO:0005960">
    <property type="term" value="C:glycine cleavage complex"/>
    <property type="evidence" value="ECO:0007669"/>
    <property type="project" value="InterPro"/>
</dbReference>
<dbReference type="GO" id="GO:0004047">
    <property type="term" value="F:aminomethyltransferase activity"/>
    <property type="evidence" value="ECO:0007669"/>
    <property type="project" value="UniProtKB-UniRule"/>
</dbReference>
<dbReference type="GO" id="GO:0008483">
    <property type="term" value="F:transaminase activity"/>
    <property type="evidence" value="ECO:0007669"/>
    <property type="project" value="UniProtKB-KW"/>
</dbReference>
<dbReference type="GO" id="GO:0019464">
    <property type="term" value="P:glycine decarboxylation via glycine cleavage system"/>
    <property type="evidence" value="ECO:0007669"/>
    <property type="project" value="UniProtKB-UniRule"/>
</dbReference>
<dbReference type="FunFam" id="2.40.30.110:FF:000001">
    <property type="entry name" value="Aminomethyltransferase"/>
    <property type="match status" value="1"/>
</dbReference>
<dbReference type="FunFam" id="3.30.70.1400:FF:000001">
    <property type="entry name" value="Aminomethyltransferase"/>
    <property type="match status" value="1"/>
</dbReference>
<dbReference type="FunFam" id="4.10.1250.10:FF:000001">
    <property type="entry name" value="Aminomethyltransferase"/>
    <property type="match status" value="1"/>
</dbReference>
<dbReference type="Gene3D" id="2.40.30.110">
    <property type="entry name" value="Aminomethyltransferase beta-barrel domains"/>
    <property type="match status" value="1"/>
</dbReference>
<dbReference type="Gene3D" id="3.30.70.1400">
    <property type="entry name" value="Aminomethyltransferase beta-barrel domains"/>
    <property type="match status" value="1"/>
</dbReference>
<dbReference type="Gene3D" id="4.10.1250.10">
    <property type="entry name" value="Aminomethyltransferase fragment"/>
    <property type="match status" value="1"/>
</dbReference>
<dbReference type="Gene3D" id="3.30.1360.120">
    <property type="entry name" value="Probable tRNA modification gtpase trme, domain 1"/>
    <property type="match status" value="1"/>
</dbReference>
<dbReference type="HAMAP" id="MF_00259">
    <property type="entry name" value="GcvT"/>
    <property type="match status" value="1"/>
</dbReference>
<dbReference type="InterPro" id="IPR006223">
    <property type="entry name" value="GCS_T"/>
</dbReference>
<dbReference type="InterPro" id="IPR022903">
    <property type="entry name" value="GCS_T_bac"/>
</dbReference>
<dbReference type="InterPro" id="IPR013977">
    <property type="entry name" value="GCST_C"/>
</dbReference>
<dbReference type="InterPro" id="IPR006222">
    <property type="entry name" value="GCV_T_N"/>
</dbReference>
<dbReference type="InterPro" id="IPR028896">
    <property type="entry name" value="GcvT/YgfZ/DmdA"/>
</dbReference>
<dbReference type="InterPro" id="IPR029043">
    <property type="entry name" value="GcvT/YgfZ_C"/>
</dbReference>
<dbReference type="InterPro" id="IPR027266">
    <property type="entry name" value="TrmE/GcvT_dom1"/>
</dbReference>
<dbReference type="NCBIfam" id="TIGR00528">
    <property type="entry name" value="gcvT"/>
    <property type="match status" value="1"/>
</dbReference>
<dbReference type="NCBIfam" id="NF001567">
    <property type="entry name" value="PRK00389.1"/>
    <property type="match status" value="1"/>
</dbReference>
<dbReference type="PANTHER" id="PTHR43757">
    <property type="entry name" value="AMINOMETHYLTRANSFERASE"/>
    <property type="match status" value="1"/>
</dbReference>
<dbReference type="PANTHER" id="PTHR43757:SF2">
    <property type="entry name" value="AMINOMETHYLTRANSFERASE, MITOCHONDRIAL"/>
    <property type="match status" value="1"/>
</dbReference>
<dbReference type="Pfam" id="PF01571">
    <property type="entry name" value="GCV_T"/>
    <property type="match status" value="1"/>
</dbReference>
<dbReference type="Pfam" id="PF08669">
    <property type="entry name" value="GCV_T_C"/>
    <property type="match status" value="1"/>
</dbReference>
<dbReference type="PIRSF" id="PIRSF006487">
    <property type="entry name" value="GcvT"/>
    <property type="match status" value="1"/>
</dbReference>
<dbReference type="SUPFAM" id="SSF101790">
    <property type="entry name" value="Aminomethyltransferase beta-barrel domain"/>
    <property type="match status" value="1"/>
</dbReference>
<dbReference type="SUPFAM" id="SSF103025">
    <property type="entry name" value="Folate-binding domain"/>
    <property type="match status" value="1"/>
</dbReference>
<accession>Q8EIQ8</accession>
<name>GCST_SHEON</name>
<comment type="function">
    <text evidence="1">The glycine cleavage system catalyzes the degradation of glycine.</text>
</comment>
<comment type="catalytic activity">
    <reaction evidence="1">
        <text>N(6)-[(R)-S(8)-aminomethyldihydrolipoyl]-L-lysyl-[protein] + (6S)-5,6,7,8-tetrahydrofolate = N(6)-[(R)-dihydrolipoyl]-L-lysyl-[protein] + (6R)-5,10-methylene-5,6,7,8-tetrahydrofolate + NH4(+)</text>
        <dbReference type="Rhea" id="RHEA:16945"/>
        <dbReference type="Rhea" id="RHEA-COMP:10475"/>
        <dbReference type="Rhea" id="RHEA-COMP:10492"/>
        <dbReference type="ChEBI" id="CHEBI:15636"/>
        <dbReference type="ChEBI" id="CHEBI:28938"/>
        <dbReference type="ChEBI" id="CHEBI:57453"/>
        <dbReference type="ChEBI" id="CHEBI:83100"/>
        <dbReference type="ChEBI" id="CHEBI:83143"/>
        <dbReference type="EC" id="2.1.2.10"/>
    </reaction>
</comment>
<comment type="subunit">
    <text evidence="1">The glycine cleavage system is composed of four proteins: P, T, L and H.</text>
</comment>
<comment type="similarity">
    <text evidence="1">Belongs to the GcvT family.</text>
</comment>
<reference key="1">
    <citation type="journal article" date="2002" name="Nat. Biotechnol.">
        <title>Genome sequence of the dissimilatory metal ion-reducing bacterium Shewanella oneidensis.</title>
        <authorList>
            <person name="Heidelberg J.F."/>
            <person name="Paulsen I.T."/>
            <person name="Nelson K.E."/>
            <person name="Gaidos E.J."/>
            <person name="Nelson W.C."/>
            <person name="Read T.D."/>
            <person name="Eisen J.A."/>
            <person name="Seshadri R."/>
            <person name="Ward N.L."/>
            <person name="Methe B.A."/>
            <person name="Clayton R.A."/>
            <person name="Meyer T."/>
            <person name="Tsapin A."/>
            <person name="Scott J."/>
            <person name="Beanan M.J."/>
            <person name="Brinkac L.M."/>
            <person name="Daugherty S.C."/>
            <person name="DeBoy R.T."/>
            <person name="Dodson R.J."/>
            <person name="Durkin A.S."/>
            <person name="Haft D.H."/>
            <person name="Kolonay J.F."/>
            <person name="Madupu R."/>
            <person name="Peterson J.D."/>
            <person name="Umayam L.A."/>
            <person name="White O."/>
            <person name="Wolf A.M."/>
            <person name="Vamathevan J.J."/>
            <person name="Weidman J.F."/>
            <person name="Impraim M."/>
            <person name="Lee K."/>
            <person name="Berry K.J."/>
            <person name="Lee C."/>
            <person name="Mueller J."/>
            <person name="Khouri H.M."/>
            <person name="Gill J."/>
            <person name="Utterback T.R."/>
            <person name="McDonald L.A."/>
            <person name="Feldblyum T.V."/>
            <person name="Smith H.O."/>
            <person name="Venter J.C."/>
            <person name="Nealson K.H."/>
            <person name="Fraser C.M."/>
        </authorList>
    </citation>
    <scope>NUCLEOTIDE SEQUENCE [LARGE SCALE GENOMIC DNA]</scope>
    <source>
        <strain>ATCC 700550 / JCM 31522 / CIP 106686 / LMG 19005 / NCIMB 14063 / MR-1</strain>
    </source>
</reference>
<evidence type="ECO:0000255" key="1">
    <source>
        <dbReference type="HAMAP-Rule" id="MF_00259"/>
    </source>
</evidence>
<sequence>MANKTVLFNKHLESNAKMVDFHGWDMPLNYGSQIEEHHAVRQDAGMFDVSHMTVVDVTGTDACAFLRKLLANDVAKLKVPGKALYGGMLDDNAGIIDDLITYYLTDTFYRVVVNSATREKDLAWIAKQSQGFDVTVTERPELAMIAVQGPNAKAKAAAVFSSEQNAAIEGMKPFFGKQAGSLFIATTGYTGEAGYEIIVPETEAEALWQALLDQGVKPCGLGARDTLRLEAGMNLYGLDMDETINPLAANMGWTIAWEPTDRDFIGRKALEALRDAGTDKLVGLVMEEKGVLRHDMPVFFTDAAGVEQQGVITSGTFSPTLGYSIAMARVPSSIGDTAEVEMRKKRVAVRVVAPNFVRNGKQAF</sequence>
<feature type="chain" id="PRO_0000122593" description="Aminomethyltransferase">
    <location>
        <begin position="1"/>
        <end position="364"/>
    </location>
</feature>
<gene>
    <name evidence="1" type="primary">gcvT</name>
    <name type="ordered locus">SO_0779</name>
</gene>
<proteinExistence type="inferred from homology"/>
<keyword id="KW-0032">Aminotransferase</keyword>
<keyword id="KW-1185">Reference proteome</keyword>
<keyword id="KW-0808">Transferase</keyword>
<protein>
    <recommendedName>
        <fullName evidence="1">Aminomethyltransferase</fullName>
        <ecNumber evidence="1">2.1.2.10</ecNumber>
    </recommendedName>
    <alternativeName>
        <fullName evidence="1">Glycine cleavage system T protein</fullName>
    </alternativeName>
</protein>
<organism>
    <name type="scientific">Shewanella oneidensis (strain ATCC 700550 / JCM 31522 / CIP 106686 / LMG 19005 / NCIMB 14063 / MR-1)</name>
    <dbReference type="NCBI Taxonomy" id="211586"/>
    <lineage>
        <taxon>Bacteria</taxon>
        <taxon>Pseudomonadati</taxon>
        <taxon>Pseudomonadota</taxon>
        <taxon>Gammaproteobacteria</taxon>
        <taxon>Alteromonadales</taxon>
        <taxon>Shewanellaceae</taxon>
        <taxon>Shewanella</taxon>
    </lineage>
</organism>